<evidence type="ECO:0000255" key="1"/>
<evidence type="ECO:0000305" key="2"/>
<name>Y439_METJA</name>
<feature type="chain" id="PRO_0000184668" description="Uncharacterized ATP-binding protein MJ0439">
    <location>
        <begin position="1"/>
        <end position="361"/>
    </location>
</feature>
<feature type="binding site" evidence="1">
    <location>
        <begin position="41"/>
        <end position="48"/>
    </location>
    <ligand>
        <name>ATP</name>
        <dbReference type="ChEBI" id="CHEBI:30616"/>
    </ligand>
</feature>
<organism>
    <name type="scientific">Methanocaldococcus jannaschii (strain ATCC 43067 / DSM 2661 / JAL-1 / JCM 10045 / NBRC 100440)</name>
    <name type="common">Methanococcus jannaschii</name>
    <dbReference type="NCBI Taxonomy" id="243232"/>
    <lineage>
        <taxon>Archaea</taxon>
        <taxon>Methanobacteriati</taxon>
        <taxon>Methanobacteriota</taxon>
        <taxon>Methanomada group</taxon>
        <taxon>Methanococci</taxon>
        <taxon>Methanococcales</taxon>
        <taxon>Methanocaldococcaceae</taxon>
        <taxon>Methanocaldococcus</taxon>
    </lineage>
</organism>
<protein>
    <recommendedName>
        <fullName>Uncharacterized ATP-binding protein MJ0439</fullName>
    </recommendedName>
</protein>
<proteinExistence type="inferred from homology"/>
<keyword id="KW-0067">ATP-binding</keyword>
<keyword id="KW-0547">Nucleotide-binding</keyword>
<keyword id="KW-1185">Reference proteome</keyword>
<comment type="similarity">
    <text evidence="2">Belongs to the archaeal ATPase family.</text>
</comment>
<gene>
    <name type="ordered locus">MJ0439</name>
</gene>
<accession>Q57881</accession>
<dbReference type="EMBL" id="L77117">
    <property type="protein sequence ID" value="AAB98434.1"/>
    <property type="molecule type" value="Genomic_DNA"/>
</dbReference>
<dbReference type="PIR" id="G64354">
    <property type="entry name" value="G64354"/>
</dbReference>
<dbReference type="SMR" id="Q57881"/>
<dbReference type="PaxDb" id="243232-MJ_0439"/>
<dbReference type="DNASU" id="1451299"/>
<dbReference type="EnsemblBacteria" id="AAB98434">
    <property type="protein sequence ID" value="AAB98434"/>
    <property type="gene ID" value="MJ_0439"/>
</dbReference>
<dbReference type="KEGG" id="mja:MJ_0439"/>
<dbReference type="eggNOG" id="arCOG03407">
    <property type="taxonomic scope" value="Archaea"/>
</dbReference>
<dbReference type="HOGENOM" id="CLU_068608_0_0_2"/>
<dbReference type="InParanoid" id="Q57881"/>
<dbReference type="PhylomeDB" id="Q57881"/>
<dbReference type="Proteomes" id="UP000000805">
    <property type="component" value="Chromosome"/>
</dbReference>
<dbReference type="GO" id="GO:0005524">
    <property type="term" value="F:ATP binding"/>
    <property type="evidence" value="ECO:0007669"/>
    <property type="project" value="UniProtKB-KW"/>
</dbReference>
<dbReference type="GO" id="GO:0016887">
    <property type="term" value="F:ATP hydrolysis activity"/>
    <property type="evidence" value="ECO:0007669"/>
    <property type="project" value="InterPro"/>
</dbReference>
<dbReference type="CDD" id="cd00009">
    <property type="entry name" value="AAA"/>
    <property type="match status" value="1"/>
</dbReference>
<dbReference type="Gene3D" id="3.40.50.300">
    <property type="entry name" value="P-loop containing nucleotide triphosphate hydrolases"/>
    <property type="match status" value="1"/>
</dbReference>
<dbReference type="Gene3D" id="1.10.10.10">
    <property type="entry name" value="Winged helix-like DNA-binding domain superfamily/Winged helix DNA-binding domain"/>
    <property type="match status" value="1"/>
</dbReference>
<dbReference type="InterPro" id="IPR003593">
    <property type="entry name" value="AAA+_ATPase"/>
</dbReference>
<dbReference type="InterPro" id="IPR051667">
    <property type="entry name" value="Archaeal_ATPase_domain"/>
</dbReference>
<dbReference type="InterPro" id="IPR011579">
    <property type="entry name" value="ATPase_dom"/>
</dbReference>
<dbReference type="InterPro" id="IPR049081">
    <property type="entry name" value="MJ1010-like_2nd"/>
</dbReference>
<dbReference type="InterPro" id="IPR027417">
    <property type="entry name" value="P-loop_NTPase"/>
</dbReference>
<dbReference type="InterPro" id="IPR036388">
    <property type="entry name" value="WH-like_DNA-bd_sf"/>
</dbReference>
<dbReference type="PANTHER" id="PTHR37096:SF1">
    <property type="entry name" value="AAA+ ATPASE DOMAIN-CONTAINING PROTEIN"/>
    <property type="match status" value="1"/>
</dbReference>
<dbReference type="PANTHER" id="PTHR37096">
    <property type="entry name" value="YALI0E33429P"/>
    <property type="match status" value="1"/>
</dbReference>
<dbReference type="Pfam" id="PF01637">
    <property type="entry name" value="ATPase_2"/>
    <property type="match status" value="1"/>
</dbReference>
<dbReference type="Pfam" id="PF21690">
    <property type="entry name" value="MJ1010-like_2nd"/>
    <property type="match status" value="1"/>
</dbReference>
<dbReference type="SMART" id="SM00382">
    <property type="entry name" value="AAA"/>
    <property type="match status" value="1"/>
</dbReference>
<dbReference type="SUPFAM" id="SSF52540">
    <property type="entry name" value="P-loop containing nucleoside triphosphate hydrolases"/>
    <property type="match status" value="1"/>
</dbReference>
<reference key="1">
    <citation type="journal article" date="1996" name="Science">
        <title>Complete genome sequence of the methanogenic archaeon, Methanococcus jannaschii.</title>
        <authorList>
            <person name="Bult C.J."/>
            <person name="White O."/>
            <person name="Olsen G.J."/>
            <person name="Zhou L."/>
            <person name="Fleischmann R.D."/>
            <person name="Sutton G.G."/>
            <person name="Blake J.A."/>
            <person name="FitzGerald L.M."/>
            <person name="Clayton R.A."/>
            <person name="Gocayne J.D."/>
            <person name="Kerlavage A.R."/>
            <person name="Dougherty B.A."/>
            <person name="Tomb J.-F."/>
            <person name="Adams M.D."/>
            <person name="Reich C.I."/>
            <person name="Overbeek R."/>
            <person name="Kirkness E.F."/>
            <person name="Weinstock K.G."/>
            <person name="Merrick J.M."/>
            <person name="Glodek A."/>
            <person name="Scott J.L."/>
            <person name="Geoghagen N.S.M."/>
            <person name="Weidman J.F."/>
            <person name="Fuhrmann J.L."/>
            <person name="Nguyen D."/>
            <person name="Utterback T.R."/>
            <person name="Kelley J.M."/>
            <person name="Peterson J.D."/>
            <person name="Sadow P.W."/>
            <person name="Hanna M.C."/>
            <person name="Cotton M.D."/>
            <person name="Roberts K.M."/>
            <person name="Hurst M.A."/>
            <person name="Kaine B.P."/>
            <person name="Borodovsky M."/>
            <person name="Klenk H.-P."/>
            <person name="Fraser C.M."/>
            <person name="Smith H.O."/>
            <person name="Woese C.R."/>
            <person name="Venter J.C."/>
        </authorList>
    </citation>
    <scope>NUCLEOTIDE SEQUENCE [LARGE SCALE GENOMIC DNA]</scope>
    <source>
        <strain>ATCC 43067 / DSM 2661 / JAL-1 / JCM 10045 / NBRC 100440</strain>
    </source>
</reference>
<reference key="2">
    <citation type="journal article" date="1997" name="Science">
        <title>Evidence for a family of archaeal ATPases.</title>
        <authorList>
            <person name="Koonin E.V."/>
        </authorList>
    </citation>
    <scope>SIMILARITY</scope>
</reference>
<sequence length="361" mass="42610">MNYIYSFINGDFMRFFNREKEITEILSILEGNPDLVYFVYGPLNSGKTALISEIINNRIDKNKYVVFYINLRGIFISKYKDFIEVLFEEYEEDRKPVEIIKSLIKDVPSLCGIPTPKNTLEEILKKKTTKNVFKYITNVLMDIKKEGKQPIIIIDELQKIGDMKINGFLIYELFNYFVDLTKELHLCHVFCLSSDSLFIEQVYSEAMLKDRVDYILVDDFDKETALKFMDFLAEEILNKKLSDDEKELIYSYVGGKPILIIKVIKKLKIKGLKETLDEMLRDEMQKLKYFLEDIKEKDEESYNKIADALEIFKDSYEIEDIKIPKNIREFLVKKNILFLNPQKGTLKPQSYLVWNAIKRLL</sequence>